<evidence type="ECO:0000255" key="1">
    <source>
        <dbReference type="HAMAP-Rule" id="MF_00365"/>
    </source>
</evidence>
<name>RECF_STRPG</name>
<accession>A2RH21</accession>
<keyword id="KW-0067">ATP-binding</keyword>
<keyword id="KW-0963">Cytoplasm</keyword>
<keyword id="KW-0227">DNA damage</keyword>
<keyword id="KW-0234">DNA repair</keyword>
<keyword id="KW-0235">DNA replication</keyword>
<keyword id="KW-0238">DNA-binding</keyword>
<keyword id="KW-0547">Nucleotide-binding</keyword>
<keyword id="KW-0742">SOS response</keyword>
<organism>
    <name type="scientific">Streptococcus pyogenes serotype M5 (strain Manfredo)</name>
    <dbReference type="NCBI Taxonomy" id="160491"/>
    <lineage>
        <taxon>Bacteria</taxon>
        <taxon>Bacillati</taxon>
        <taxon>Bacillota</taxon>
        <taxon>Bacilli</taxon>
        <taxon>Lactobacillales</taxon>
        <taxon>Streptococcaceae</taxon>
        <taxon>Streptococcus</taxon>
    </lineage>
</organism>
<comment type="function">
    <text evidence="1">The RecF protein is involved in DNA metabolism; it is required for DNA replication and normal SOS inducibility. RecF binds preferentially to single-stranded, linear DNA. It also seems to bind ATP.</text>
</comment>
<comment type="subcellular location">
    <subcellularLocation>
        <location evidence="1">Cytoplasm</location>
    </subcellularLocation>
</comment>
<comment type="similarity">
    <text evidence="1">Belongs to the RecF family.</text>
</comment>
<sequence>MWIKELELKHYRNYDHLLASFSSGLNVFIGNNAQGKTNFLEAIYFLSLTRSHRTRADKELIHFDHSTVSLTGKIQRISGTVDLEINLSDKGRVTKINALKQAKLSDYIGTMMVVLFAPEDLQLVKGAPSLRRKFIDIDLGQIKPVYLSELSHYNHVLKQRNSYLKSAQQIDAAFLAVLDEQLAGYGARVMEHRIDFINALEKEANTHHQAISNGLESLSLSYQSSVVFDKKTNIYQQFLHQLEKNHQKDFFRKNTSVGPHRDDLAFYINGMNANFASQGQHRSLILSLKMAEVSLMKALTGDNPILLLDDVMSELDNTRQTKLLETVIKENVQTFITTTSLDHLSQLPEGIHIFHVTKGTVQIDSDIH</sequence>
<gene>
    <name evidence="1" type="primary">recF</name>
    <name type="ordered locus">SpyM51828</name>
</gene>
<dbReference type="EMBL" id="AM295007">
    <property type="protein sequence ID" value="CAM31153.1"/>
    <property type="molecule type" value="Genomic_DNA"/>
</dbReference>
<dbReference type="RefSeq" id="WP_011889258.1">
    <property type="nucleotide sequence ID" value="NC_009332.1"/>
</dbReference>
<dbReference type="SMR" id="A2RH21"/>
<dbReference type="KEGG" id="spf:SpyM51828"/>
<dbReference type="HOGENOM" id="CLU_040267_0_1_9"/>
<dbReference type="GO" id="GO:0005737">
    <property type="term" value="C:cytoplasm"/>
    <property type="evidence" value="ECO:0007669"/>
    <property type="project" value="UniProtKB-SubCell"/>
</dbReference>
<dbReference type="GO" id="GO:0005524">
    <property type="term" value="F:ATP binding"/>
    <property type="evidence" value="ECO:0007669"/>
    <property type="project" value="UniProtKB-UniRule"/>
</dbReference>
<dbReference type="GO" id="GO:0003697">
    <property type="term" value="F:single-stranded DNA binding"/>
    <property type="evidence" value="ECO:0007669"/>
    <property type="project" value="UniProtKB-UniRule"/>
</dbReference>
<dbReference type="GO" id="GO:0006260">
    <property type="term" value="P:DNA replication"/>
    <property type="evidence" value="ECO:0007669"/>
    <property type="project" value="UniProtKB-UniRule"/>
</dbReference>
<dbReference type="GO" id="GO:0000731">
    <property type="term" value="P:DNA synthesis involved in DNA repair"/>
    <property type="evidence" value="ECO:0007669"/>
    <property type="project" value="TreeGrafter"/>
</dbReference>
<dbReference type="GO" id="GO:0006302">
    <property type="term" value="P:double-strand break repair"/>
    <property type="evidence" value="ECO:0007669"/>
    <property type="project" value="TreeGrafter"/>
</dbReference>
<dbReference type="GO" id="GO:0009432">
    <property type="term" value="P:SOS response"/>
    <property type="evidence" value="ECO:0007669"/>
    <property type="project" value="UniProtKB-UniRule"/>
</dbReference>
<dbReference type="CDD" id="cd03242">
    <property type="entry name" value="ABC_RecF"/>
    <property type="match status" value="1"/>
</dbReference>
<dbReference type="Gene3D" id="3.40.50.300">
    <property type="entry name" value="P-loop containing nucleotide triphosphate hydrolases"/>
    <property type="match status" value="1"/>
</dbReference>
<dbReference type="Gene3D" id="1.20.1050.90">
    <property type="entry name" value="RecF/RecN/SMC, N-terminal domain"/>
    <property type="match status" value="1"/>
</dbReference>
<dbReference type="HAMAP" id="MF_00365">
    <property type="entry name" value="RecF"/>
    <property type="match status" value="1"/>
</dbReference>
<dbReference type="InterPro" id="IPR001238">
    <property type="entry name" value="DNA-binding_RecF"/>
</dbReference>
<dbReference type="InterPro" id="IPR018078">
    <property type="entry name" value="DNA-binding_RecF_CS"/>
</dbReference>
<dbReference type="InterPro" id="IPR027417">
    <property type="entry name" value="P-loop_NTPase"/>
</dbReference>
<dbReference type="InterPro" id="IPR003395">
    <property type="entry name" value="RecF/RecN/SMC_N"/>
</dbReference>
<dbReference type="InterPro" id="IPR042174">
    <property type="entry name" value="RecF_2"/>
</dbReference>
<dbReference type="NCBIfam" id="TIGR00611">
    <property type="entry name" value="recf"/>
    <property type="match status" value="1"/>
</dbReference>
<dbReference type="PANTHER" id="PTHR32182">
    <property type="entry name" value="DNA REPLICATION AND REPAIR PROTEIN RECF"/>
    <property type="match status" value="1"/>
</dbReference>
<dbReference type="PANTHER" id="PTHR32182:SF0">
    <property type="entry name" value="DNA REPLICATION AND REPAIR PROTEIN RECF"/>
    <property type="match status" value="1"/>
</dbReference>
<dbReference type="Pfam" id="PF02463">
    <property type="entry name" value="SMC_N"/>
    <property type="match status" value="1"/>
</dbReference>
<dbReference type="SUPFAM" id="SSF52540">
    <property type="entry name" value="P-loop containing nucleoside triphosphate hydrolases"/>
    <property type="match status" value="1"/>
</dbReference>
<dbReference type="PROSITE" id="PS00617">
    <property type="entry name" value="RECF_1"/>
    <property type="match status" value="1"/>
</dbReference>
<dbReference type="PROSITE" id="PS00618">
    <property type="entry name" value="RECF_2"/>
    <property type="match status" value="1"/>
</dbReference>
<proteinExistence type="inferred from homology"/>
<protein>
    <recommendedName>
        <fullName evidence="1">DNA replication and repair protein RecF</fullName>
    </recommendedName>
</protein>
<feature type="chain" id="PRO_1000048588" description="DNA replication and repair protein RecF">
    <location>
        <begin position="1"/>
        <end position="368"/>
    </location>
</feature>
<feature type="binding site" evidence="1">
    <location>
        <begin position="30"/>
        <end position="37"/>
    </location>
    <ligand>
        <name>ATP</name>
        <dbReference type="ChEBI" id="CHEBI:30616"/>
    </ligand>
</feature>
<reference key="1">
    <citation type="journal article" date="2007" name="J. Bacteriol.">
        <title>Complete genome of acute rheumatic fever-associated serotype M5 Streptococcus pyogenes strain Manfredo.</title>
        <authorList>
            <person name="Holden M.T.G."/>
            <person name="Scott A."/>
            <person name="Cherevach I."/>
            <person name="Chillingworth T."/>
            <person name="Churcher C."/>
            <person name="Cronin A."/>
            <person name="Dowd L."/>
            <person name="Feltwell T."/>
            <person name="Hamlin N."/>
            <person name="Holroyd S."/>
            <person name="Jagels K."/>
            <person name="Moule S."/>
            <person name="Mungall K."/>
            <person name="Quail M.A."/>
            <person name="Price C."/>
            <person name="Rabbinowitsch E."/>
            <person name="Sharp S."/>
            <person name="Skelton J."/>
            <person name="Whitehead S."/>
            <person name="Barrell B.G."/>
            <person name="Kehoe M."/>
            <person name="Parkhill J."/>
        </authorList>
    </citation>
    <scope>NUCLEOTIDE SEQUENCE [LARGE SCALE GENOMIC DNA]</scope>
    <source>
        <strain>Manfredo</strain>
    </source>
</reference>